<proteinExistence type="inferred from homology"/>
<sequence>MSRADDPGVAGLQVYIVGGAVRDGLLGLPAGDRDWVVVGATPEDMARRGFIPVGGDFPVFLHPRTKEEYALARTERKSGRGYKGFTFYTGADVTLEQDLQRRDLTVNAIARTPQGELVDPLDGVADVRARVLRHVGEAFAEDPVRILRLGRFAARFGDFSIAPETMQLCRRMVEAGEADALVPERVWKEVSRGLMAQAPSRMLDVLARAGALARVMPELHDDAAVRAEIDRAAAAGLPLAGRYALLCRHTPERDALGRRLRAPVECMDQARLLPLAVDALAASATPAAQLDLIERCDALRKPERFDALLQAAAIVAPVDLSAWRARVQAVRAIDAGAIARQCAGDPARIKPALRQARLQALGGA</sequence>
<organism>
    <name type="scientific">Bordetella bronchiseptica (strain ATCC BAA-588 / NCTC 13252 / RB50)</name>
    <name type="common">Alcaligenes bronchisepticus</name>
    <dbReference type="NCBI Taxonomy" id="257310"/>
    <lineage>
        <taxon>Bacteria</taxon>
        <taxon>Pseudomonadati</taxon>
        <taxon>Pseudomonadota</taxon>
        <taxon>Betaproteobacteria</taxon>
        <taxon>Burkholderiales</taxon>
        <taxon>Alcaligenaceae</taxon>
        <taxon>Bordetella</taxon>
    </lineage>
</organism>
<protein>
    <recommendedName>
        <fullName evidence="1">CCA-adding enzyme</fullName>
        <ecNumber evidence="1">2.7.7.72</ecNumber>
    </recommendedName>
    <alternativeName>
        <fullName evidence="1">CCA tRNA nucleotidyltransferase</fullName>
    </alternativeName>
    <alternativeName>
        <fullName evidence="1">tRNA CCA-pyrophosphorylase</fullName>
    </alternativeName>
    <alternativeName>
        <fullName evidence="1">tRNA adenylyl-/cytidylyl- transferase</fullName>
    </alternativeName>
    <alternativeName>
        <fullName evidence="1">tRNA nucleotidyltransferase</fullName>
    </alternativeName>
    <alternativeName>
        <fullName evidence="1">tRNA-NT</fullName>
    </alternativeName>
</protein>
<evidence type="ECO:0000255" key="1">
    <source>
        <dbReference type="HAMAP-Rule" id="MF_01262"/>
    </source>
</evidence>
<name>CCA_BORBR</name>
<keyword id="KW-0067">ATP-binding</keyword>
<keyword id="KW-0460">Magnesium</keyword>
<keyword id="KW-0479">Metal-binding</keyword>
<keyword id="KW-0547">Nucleotide-binding</keyword>
<keyword id="KW-0548">Nucleotidyltransferase</keyword>
<keyword id="KW-0692">RNA repair</keyword>
<keyword id="KW-0694">RNA-binding</keyword>
<keyword id="KW-0808">Transferase</keyword>
<keyword id="KW-0819">tRNA processing</keyword>
<dbReference type="EC" id="2.7.7.72" evidence="1"/>
<dbReference type="EMBL" id="BX640437">
    <property type="protein sequence ID" value="CAE30705.1"/>
    <property type="molecule type" value="Genomic_DNA"/>
</dbReference>
<dbReference type="RefSeq" id="WP_010925733.1">
    <property type="nucleotide sequence ID" value="NC_002927.3"/>
</dbReference>
<dbReference type="SMR" id="Q7U391"/>
<dbReference type="KEGG" id="bbr:BB0207"/>
<dbReference type="eggNOG" id="COG0617">
    <property type="taxonomic scope" value="Bacteria"/>
</dbReference>
<dbReference type="HOGENOM" id="CLU_015961_1_0_4"/>
<dbReference type="Proteomes" id="UP000001027">
    <property type="component" value="Chromosome"/>
</dbReference>
<dbReference type="GO" id="GO:0005524">
    <property type="term" value="F:ATP binding"/>
    <property type="evidence" value="ECO:0007669"/>
    <property type="project" value="UniProtKB-UniRule"/>
</dbReference>
<dbReference type="GO" id="GO:0004810">
    <property type="term" value="F:CCA tRNA nucleotidyltransferase activity"/>
    <property type="evidence" value="ECO:0007669"/>
    <property type="project" value="UniProtKB-UniRule"/>
</dbReference>
<dbReference type="GO" id="GO:0000287">
    <property type="term" value="F:magnesium ion binding"/>
    <property type="evidence" value="ECO:0007669"/>
    <property type="project" value="UniProtKB-UniRule"/>
</dbReference>
<dbReference type="GO" id="GO:0000049">
    <property type="term" value="F:tRNA binding"/>
    <property type="evidence" value="ECO:0007669"/>
    <property type="project" value="UniProtKB-UniRule"/>
</dbReference>
<dbReference type="GO" id="GO:0042245">
    <property type="term" value="P:RNA repair"/>
    <property type="evidence" value="ECO:0007669"/>
    <property type="project" value="UniProtKB-KW"/>
</dbReference>
<dbReference type="GO" id="GO:0001680">
    <property type="term" value="P:tRNA 3'-terminal CCA addition"/>
    <property type="evidence" value="ECO:0007669"/>
    <property type="project" value="UniProtKB-UniRule"/>
</dbReference>
<dbReference type="Gene3D" id="3.30.460.10">
    <property type="entry name" value="Beta Polymerase, domain 2"/>
    <property type="match status" value="1"/>
</dbReference>
<dbReference type="Gene3D" id="1.10.3090.10">
    <property type="entry name" value="cca-adding enzyme, domain 2"/>
    <property type="match status" value="1"/>
</dbReference>
<dbReference type="HAMAP" id="MF_01262">
    <property type="entry name" value="CCA_bact_type2"/>
    <property type="match status" value="1"/>
</dbReference>
<dbReference type="InterPro" id="IPR012006">
    <property type="entry name" value="CCA_bact"/>
</dbReference>
<dbReference type="InterPro" id="IPR043519">
    <property type="entry name" value="NT_sf"/>
</dbReference>
<dbReference type="InterPro" id="IPR002646">
    <property type="entry name" value="PolA_pol_head_dom"/>
</dbReference>
<dbReference type="InterPro" id="IPR032828">
    <property type="entry name" value="PolyA_RNA-bd"/>
</dbReference>
<dbReference type="InterPro" id="IPR050124">
    <property type="entry name" value="tRNA_CCA-adding_enzyme"/>
</dbReference>
<dbReference type="NCBIfam" id="NF009812">
    <property type="entry name" value="PRK13297.1"/>
    <property type="match status" value="1"/>
</dbReference>
<dbReference type="PANTHER" id="PTHR47545">
    <property type="entry name" value="MULTIFUNCTIONAL CCA PROTEIN"/>
    <property type="match status" value="1"/>
</dbReference>
<dbReference type="PANTHER" id="PTHR47545:SF1">
    <property type="entry name" value="MULTIFUNCTIONAL CCA PROTEIN"/>
    <property type="match status" value="1"/>
</dbReference>
<dbReference type="Pfam" id="PF01743">
    <property type="entry name" value="PolyA_pol"/>
    <property type="match status" value="1"/>
</dbReference>
<dbReference type="Pfam" id="PF12627">
    <property type="entry name" value="PolyA_pol_RNAbd"/>
    <property type="match status" value="1"/>
</dbReference>
<dbReference type="PIRSF" id="PIRSF000813">
    <property type="entry name" value="CCA_bact"/>
    <property type="match status" value="1"/>
</dbReference>
<dbReference type="SUPFAM" id="SSF81301">
    <property type="entry name" value="Nucleotidyltransferase"/>
    <property type="match status" value="1"/>
</dbReference>
<dbReference type="SUPFAM" id="SSF81891">
    <property type="entry name" value="Poly A polymerase C-terminal region-like"/>
    <property type="match status" value="1"/>
</dbReference>
<feature type="chain" id="PRO_0000139014" description="CCA-adding enzyme">
    <location>
        <begin position="1"/>
        <end position="364"/>
    </location>
</feature>
<feature type="binding site" evidence="1">
    <location>
        <position position="19"/>
    </location>
    <ligand>
        <name>ATP</name>
        <dbReference type="ChEBI" id="CHEBI:30616"/>
    </ligand>
</feature>
<feature type="binding site" evidence="1">
    <location>
        <position position="19"/>
    </location>
    <ligand>
        <name>CTP</name>
        <dbReference type="ChEBI" id="CHEBI:37563"/>
    </ligand>
</feature>
<feature type="binding site" evidence="1">
    <location>
        <position position="22"/>
    </location>
    <ligand>
        <name>ATP</name>
        <dbReference type="ChEBI" id="CHEBI:30616"/>
    </ligand>
</feature>
<feature type="binding site" evidence="1">
    <location>
        <position position="22"/>
    </location>
    <ligand>
        <name>CTP</name>
        <dbReference type="ChEBI" id="CHEBI:37563"/>
    </ligand>
</feature>
<feature type="binding site" evidence="1">
    <location>
        <position position="32"/>
    </location>
    <ligand>
        <name>Mg(2+)</name>
        <dbReference type="ChEBI" id="CHEBI:18420"/>
    </ligand>
</feature>
<feature type="binding site" evidence="1">
    <location>
        <position position="34"/>
    </location>
    <ligand>
        <name>Mg(2+)</name>
        <dbReference type="ChEBI" id="CHEBI:18420"/>
    </ligand>
</feature>
<feature type="binding site" evidence="1">
    <location>
        <position position="102"/>
    </location>
    <ligand>
        <name>ATP</name>
        <dbReference type="ChEBI" id="CHEBI:30616"/>
    </ligand>
</feature>
<feature type="binding site" evidence="1">
    <location>
        <position position="102"/>
    </location>
    <ligand>
        <name>CTP</name>
        <dbReference type="ChEBI" id="CHEBI:37563"/>
    </ligand>
</feature>
<feature type="binding site" evidence="1">
    <location>
        <position position="148"/>
    </location>
    <ligand>
        <name>ATP</name>
        <dbReference type="ChEBI" id="CHEBI:30616"/>
    </ligand>
</feature>
<feature type="binding site" evidence="1">
    <location>
        <position position="148"/>
    </location>
    <ligand>
        <name>CTP</name>
        <dbReference type="ChEBI" id="CHEBI:37563"/>
    </ligand>
</feature>
<feature type="binding site" evidence="1">
    <location>
        <position position="151"/>
    </location>
    <ligand>
        <name>ATP</name>
        <dbReference type="ChEBI" id="CHEBI:30616"/>
    </ligand>
</feature>
<feature type="binding site" evidence="1">
    <location>
        <position position="151"/>
    </location>
    <ligand>
        <name>CTP</name>
        <dbReference type="ChEBI" id="CHEBI:37563"/>
    </ligand>
</feature>
<gene>
    <name evidence="1" type="primary">cca</name>
    <name type="ordered locus">BB0207</name>
</gene>
<accession>Q7U391</accession>
<reference key="1">
    <citation type="journal article" date="2003" name="Nat. Genet.">
        <title>Comparative analysis of the genome sequences of Bordetella pertussis, Bordetella parapertussis and Bordetella bronchiseptica.</title>
        <authorList>
            <person name="Parkhill J."/>
            <person name="Sebaihia M."/>
            <person name="Preston A."/>
            <person name="Murphy L.D."/>
            <person name="Thomson N.R."/>
            <person name="Harris D.E."/>
            <person name="Holden M.T.G."/>
            <person name="Churcher C.M."/>
            <person name="Bentley S.D."/>
            <person name="Mungall K.L."/>
            <person name="Cerdeno-Tarraga A.-M."/>
            <person name="Temple L."/>
            <person name="James K.D."/>
            <person name="Harris B."/>
            <person name="Quail M.A."/>
            <person name="Achtman M."/>
            <person name="Atkin R."/>
            <person name="Baker S."/>
            <person name="Basham D."/>
            <person name="Bason N."/>
            <person name="Cherevach I."/>
            <person name="Chillingworth T."/>
            <person name="Collins M."/>
            <person name="Cronin A."/>
            <person name="Davis P."/>
            <person name="Doggett J."/>
            <person name="Feltwell T."/>
            <person name="Goble A."/>
            <person name="Hamlin N."/>
            <person name="Hauser H."/>
            <person name="Holroyd S."/>
            <person name="Jagels K."/>
            <person name="Leather S."/>
            <person name="Moule S."/>
            <person name="Norberczak H."/>
            <person name="O'Neil S."/>
            <person name="Ormond D."/>
            <person name="Price C."/>
            <person name="Rabbinowitsch E."/>
            <person name="Rutter S."/>
            <person name="Sanders M."/>
            <person name="Saunders D."/>
            <person name="Seeger K."/>
            <person name="Sharp S."/>
            <person name="Simmonds M."/>
            <person name="Skelton J."/>
            <person name="Squares R."/>
            <person name="Squares S."/>
            <person name="Stevens K."/>
            <person name="Unwin L."/>
            <person name="Whitehead S."/>
            <person name="Barrell B.G."/>
            <person name="Maskell D.J."/>
        </authorList>
    </citation>
    <scope>NUCLEOTIDE SEQUENCE [LARGE SCALE GENOMIC DNA]</scope>
    <source>
        <strain>ATCC BAA-588 / NCTC 13252 / RB50</strain>
    </source>
</reference>
<comment type="function">
    <text evidence="1">Catalyzes the addition and repair of the essential 3'-terminal CCA sequence in tRNAs without using a nucleic acid template. Adds these three nucleotides in the order of C, C, and A to the tRNA nucleotide-73, using CTP and ATP as substrates and producing inorganic pyrophosphate. tRNA 3'-terminal CCA addition is required both for tRNA processing and repair. Also involved in tRNA surveillance by mediating tandem CCA addition to generate a CCACCA at the 3' terminus of unstable tRNAs. While stable tRNAs receive only 3'-terminal CCA, unstable tRNAs are marked with CCACCA and rapidly degraded.</text>
</comment>
<comment type="catalytic activity">
    <reaction evidence="1">
        <text>a tRNA precursor + 2 CTP + ATP = a tRNA with a 3' CCA end + 3 diphosphate</text>
        <dbReference type="Rhea" id="RHEA:14433"/>
        <dbReference type="Rhea" id="RHEA-COMP:10465"/>
        <dbReference type="Rhea" id="RHEA-COMP:10468"/>
        <dbReference type="ChEBI" id="CHEBI:30616"/>
        <dbReference type="ChEBI" id="CHEBI:33019"/>
        <dbReference type="ChEBI" id="CHEBI:37563"/>
        <dbReference type="ChEBI" id="CHEBI:74896"/>
        <dbReference type="ChEBI" id="CHEBI:83071"/>
        <dbReference type="EC" id="2.7.7.72"/>
    </reaction>
</comment>
<comment type="catalytic activity">
    <reaction evidence="1">
        <text>a tRNA with a 3' CCA end + 2 CTP + ATP = a tRNA with a 3' CCACCA end + 3 diphosphate</text>
        <dbReference type="Rhea" id="RHEA:76235"/>
        <dbReference type="Rhea" id="RHEA-COMP:10468"/>
        <dbReference type="Rhea" id="RHEA-COMP:18655"/>
        <dbReference type="ChEBI" id="CHEBI:30616"/>
        <dbReference type="ChEBI" id="CHEBI:33019"/>
        <dbReference type="ChEBI" id="CHEBI:37563"/>
        <dbReference type="ChEBI" id="CHEBI:83071"/>
        <dbReference type="ChEBI" id="CHEBI:195187"/>
    </reaction>
    <physiologicalReaction direction="left-to-right" evidence="1">
        <dbReference type="Rhea" id="RHEA:76236"/>
    </physiologicalReaction>
</comment>
<comment type="cofactor">
    <cofactor evidence="1">
        <name>Mg(2+)</name>
        <dbReference type="ChEBI" id="CHEBI:18420"/>
    </cofactor>
</comment>
<comment type="miscellaneous">
    <text evidence="1">A single active site specifically recognizes both ATP and CTP and is responsible for their addition.</text>
</comment>
<comment type="similarity">
    <text evidence="1">Belongs to the tRNA nucleotidyltransferase/poly(A) polymerase family. Bacterial CCA-adding enzyme type 2 subfamily.</text>
</comment>